<gene>
    <name type="ordered locus">TP_0825</name>
</gene>
<name>Y825_TREPA</name>
<protein>
    <recommendedName>
        <fullName>Uncharacterized protein TP_0825</fullName>
    </recommendedName>
</protein>
<proteinExistence type="predicted"/>
<reference key="1">
    <citation type="journal article" date="1998" name="Science">
        <title>Complete genome sequence of Treponema pallidum, the syphilis spirochete.</title>
        <authorList>
            <person name="Fraser C.M."/>
            <person name="Norris S.J."/>
            <person name="Weinstock G.M."/>
            <person name="White O."/>
            <person name="Sutton G.G."/>
            <person name="Dodson R.J."/>
            <person name="Gwinn M.L."/>
            <person name="Hickey E.K."/>
            <person name="Clayton R.A."/>
            <person name="Ketchum K.A."/>
            <person name="Sodergren E."/>
            <person name="Hardham J.M."/>
            <person name="McLeod M.P."/>
            <person name="Salzberg S.L."/>
            <person name="Peterson J.D."/>
            <person name="Khalak H.G."/>
            <person name="Richardson D.L."/>
            <person name="Howell J.K."/>
            <person name="Chidambaram M."/>
            <person name="Utterback T.R."/>
            <person name="McDonald L.A."/>
            <person name="Artiach P."/>
            <person name="Bowman C."/>
            <person name="Cotton M.D."/>
            <person name="Fujii C."/>
            <person name="Garland S.A."/>
            <person name="Hatch B."/>
            <person name="Horst K."/>
            <person name="Roberts K.M."/>
            <person name="Sandusky M."/>
            <person name="Weidman J.F."/>
            <person name="Smith H.O."/>
            <person name="Venter J.C."/>
        </authorList>
    </citation>
    <scope>NUCLEOTIDE SEQUENCE [LARGE SCALE GENOMIC DNA]</scope>
    <source>
        <strain>Nichols</strain>
    </source>
</reference>
<feature type="chain" id="PRO_0000202335" description="Uncharacterized protein TP_0825">
    <location>
        <begin position="1"/>
        <end position="61"/>
    </location>
</feature>
<sequence>MNSMHLHAVRYIRVRLQRMRQMAAIQRKERGGPACSRQAPGDRIRFNRRTRCLESEHRAIS</sequence>
<keyword id="KW-1185">Reference proteome</keyword>
<accession>O83797</accession>
<dbReference type="EMBL" id="AE000520">
    <property type="protein sequence ID" value="AAC65799.1"/>
    <property type="molecule type" value="Genomic_DNA"/>
</dbReference>
<dbReference type="PIR" id="C71276">
    <property type="entry name" value="C71276"/>
</dbReference>
<dbReference type="STRING" id="243276.TP_0825"/>
<dbReference type="EnsemblBacteria" id="AAC65799">
    <property type="protein sequence ID" value="AAC65799"/>
    <property type="gene ID" value="TP_0825"/>
</dbReference>
<dbReference type="KEGG" id="tpa:TP_0825"/>
<dbReference type="KEGG" id="tpw:TPANIC_0825"/>
<dbReference type="HOGENOM" id="CLU_2921416_0_0_12"/>
<dbReference type="Proteomes" id="UP000000811">
    <property type="component" value="Chromosome"/>
</dbReference>
<organism>
    <name type="scientific">Treponema pallidum (strain Nichols)</name>
    <dbReference type="NCBI Taxonomy" id="243276"/>
    <lineage>
        <taxon>Bacteria</taxon>
        <taxon>Pseudomonadati</taxon>
        <taxon>Spirochaetota</taxon>
        <taxon>Spirochaetia</taxon>
        <taxon>Spirochaetales</taxon>
        <taxon>Treponemataceae</taxon>
        <taxon>Treponema</taxon>
    </lineage>
</organism>